<gene>
    <name type="primary">glpB</name>
    <name type="ordered locus">b2242</name>
    <name type="ordered locus">JW2236</name>
</gene>
<organism>
    <name type="scientific">Escherichia coli (strain K12)</name>
    <dbReference type="NCBI Taxonomy" id="83333"/>
    <lineage>
        <taxon>Bacteria</taxon>
        <taxon>Pseudomonadati</taxon>
        <taxon>Pseudomonadota</taxon>
        <taxon>Gammaproteobacteria</taxon>
        <taxon>Enterobacterales</taxon>
        <taxon>Enterobacteriaceae</taxon>
        <taxon>Escherichia</taxon>
    </lineage>
</organism>
<feature type="chain" id="PRO_0000204559" description="Anaerobic glycerol-3-phosphate dehydrogenase subunit B">
    <location>
        <begin position="1"/>
        <end position="419"/>
    </location>
</feature>
<name>GLPB_ECOLI</name>
<evidence type="ECO:0000305" key="1"/>
<reference key="1">
    <citation type="journal article" date="1988" name="J. Bacteriol.">
        <title>Nucleotide sequence and gene-polypeptide relationships of the glpABC operon encoding the anaerobic sn-glycerol-3-phosphate dehydrogenase of Escherichia coli K-12.</title>
        <authorList>
            <person name="Cole S.T."/>
            <person name="Eiglmeier K."/>
            <person name="Ahmed S."/>
            <person name="Honore N."/>
            <person name="Elmes L."/>
            <person name="Anderson W.F."/>
            <person name="Weiner J.H."/>
        </authorList>
    </citation>
    <scope>NUCLEOTIDE SEQUENCE [GENOMIC DNA]</scope>
    <scope>PROTEIN SEQUENCE OF 1-10</scope>
    <source>
        <strain>K12</strain>
    </source>
</reference>
<reference key="2">
    <citation type="journal article" date="1997" name="DNA Res.">
        <title>Construction of a contiguous 874-kb sequence of the Escherichia coli-K12 genome corresponding to 50.0-68.8 min on the linkage map and analysis of its sequence features.</title>
        <authorList>
            <person name="Yamamoto Y."/>
            <person name="Aiba H."/>
            <person name="Baba T."/>
            <person name="Hayashi K."/>
            <person name="Inada T."/>
            <person name="Isono K."/>
            <person name="Itoh T."/>
            <person name="Kimura S."/>
            <person name="Kitagawa M."/>
            <person name="Makino K."/>
            <person name="Miki T."/>
            <person name="Mitsuhashi N."/>
            <person name="Mizobuchi K."/>
            <person name="Mori H."/>
            <person name="Nakade S."/>
            <person name="Nakamura Y."/>
            <person name="Nashimoto H."/>
            <person name="Oshima T."/>
            <person name="Oyama S."/>
            <person name="Saito N."/>
            <person name="Sampei G."/>
            <person name="Satoh Y."/>
            <person name="Sivasundaram S."/>
            <person name="Tagami H."/>
            <person name="Takahashi H."/>
            <person name="Takeda J."/>
            <person name="Takemoto K."/>
            <person name="Uehara K."/>
            <person name="Wada C."/>
            <person name="Yamagata S."/>
            <person name="Horiuchi T."/>
        </authorList>
    </citation>
    <scope>NUCLEOTIDE SEQUENCE [LARGE SCALE GENOMIC DNA]</scope>
    <source>
        <strain>K12 / W3110 / ATCC 27325 / DSM 5911</strain>
    </source>
</reference>
<reference key="3">
    <citation type="journal article" date="1997" name="Science">
        <title>The complete genome sequence of Escherichia coli K-12.</title>
        <authorList>
            <person name="Blattner F.R."/>
            <person name="Plunkett G. III"/>
            <person name="Bloch C.A."/>
            <person name="Perna N.T."/>
            <person name="Burland V."/>
            <person name="Riley M."/>
            <person name="Collado-Vides J."/>
            <person name="Glasner J.D."/>
            <person name="Rode C.K."/>
            <person name="Mayhew G.F."/>
            <person name="Gregor J."/>
            <person name="Davis N.W."/>
            <person name="Kirkpatrick H.A."/>
            <person name="Goeden M.A."/>
            <person name="Rose D.J."/>
            <person name="Mau B."/>
            <person name="Shao Y."/>
        </authorList>
    </citation>
    <scope>NUCLEOTIDE SEQUENCE [LARGE SCALE GENOMIC DNA]</scope>
    <source>
        <strain>K12 / MG1655 / ATCC 47076</strain>
    </source>
</reference>
<reference key="4">
    <citation type="journal article" date="2006" name="Mol. Syst. Biol.">
        <title>Highly accurate genome sequences of Escherichia coli K-12 strains MG1655 and W3110.</title>
        <authorList>
            <person name="Hayashi K."/>
            <person name="Morooka N."/>
            <person name="Yamamoto Y."/>
            <person name="Fujita K."/>
            <person name="Isono K."/>
            <person name="Choi S."/>
            <person name="Ohtsubo E."/>
            <person name="Baba T."/>
            <person name="Wanner B.L."/>
            <person name="Mori H."/>
            <person name="Horiuchi T."/>
        </authorList>
    </citation>
    <scope>NUCLEOTIDE SEQUENCE [LARGE SCALE GENOMIC DNA]</scope>
    <source>
        <strain>K12 / W3110 / ATCC 27325 / DSM 5911</strain>
    </source>
</reference>
<dbReference type="EC" id="1.1.5.3"/>
<dbReference type="EMBL" id="M20938">
    <property type="protein sequence ID" value="AAA83865.1"/>
    <property type="molecule type" value="Genomic_DNA"/>
</dbReference>
<dbReference type="EMBL" id="U00096">
    <property type="protein sequence ID" value="AAC75302.1"/>
    <property type="molecule type" value="Genomic_DNA"/>
</dbReference>
<dbReference type="EMBL" id="AP009048">
    <property type="protein sequence ID" value="BAA16061.1"/>
    <property type="molecule type" value="Genomic_DNA"/>
</dbReference>
<dbReference type="PIR" id="B32006">
    <property type="entry name" value="DEECNB"/>
</dbReference>
<dbReference type="RefSeq" id="NP_416745.1">
    <property type="nucleotide sequence ID" value="NC_000913.3"/>
</dbReference>
<dbReference type="RefSeq" id="WP_001209927.1">
    <property type="nucleotide sequence ID" value="NZ_LN832404.1"/>
</dbReference>
<dbReference type="BioGRID" id="4260490">
    <property type="interactions" value="450"/>
</dbReference>
<dbReference type="BioGRID" id="851074">
    <property type="interactions" value="1"/>
</dbReference>
<dbReference type="ComplexPortal" id="CPX-4841">
    <property type="entry name" value="Anaerobic glycerol-3-phosphate dehydrogenase complex"/>
</dbReference>
<dbReference type="DIP" id="DIP-9791N"/>
<dbReference type="FunCoup" id="P13033">
    <property type="interactions" value="157"/>
</dbReference>
<dbReference type="IntAct" id="P13033">
    <property type="interactions" value="5"/>
</dbReference>
<dbReference type="STRING" id="511145.b2242"/>
<dbReference type="PaxDb" id="511145-b2242"/>
<dbReference type="EnsemblBacteria" id="AAC75302">
    <property type="protein sequence ID" value="AAC75302"/>
    <property type="gene ID" value="b2242"/>
</dbReference>
<dbReference type="GeneID" id="946733"/>
<dbReference type="KEGG" id="ecj:JW2236"/>
<dbReference type="KEGG" id="eco:b2242"/>
<dbReference type="KEGG" id="ecoc:C3026_12525"/>
<dbReference type="PATRIC" id="fig|511145.12.peg.2331"/>
<dbReference type="EchoBASE" id="EB0387"/>
<dbReference type="eggNOG" id="COG3075">
    <property type="taxonomic scope" value="Bacteria"/>
</dbReference>
<dbReference type="HOGENOM" id="CLU_047793_0_0_6"/>
<dbReference type="InParanoid" id="P13033"/>
<dbReference type="OMA" id="CFGLENQ"/>
<dbReference type="OrthoDB" id="6395323at2"/>
<dbReference type="PhylomeDB" id="P13033"/>
<dbReference type="BioCyc" id="EcoCyc:ANGLYC3PDEHYDROGSUBUNITB-MONOMER"/>
<dbReference type="BioCyc" id="MetaCyc:ANGLYC3PDEHYDROGSUBUNITB-MONOMER"/>
<dbReference type="UniPathway" id="UPA00618">
    <property type="reaction ID" value="UER00673"/>
</dbReference>
<dbReference type="PRO" id="PR:P13033"/>
<dbReference type="Proteomes" id="UP000000625">
    <property type="component" value="Chromosome"/>
</dbReference>
<dbReference type="GO" id="GO:0005829">
    <property type="term" value="C:cytosol"/>
    <property type="evidence" value="ECO:0000314"/>
    <property type="project" value="EcoCyc"/>
</dbReference>
<dbReference type="GO" id="GO:0009331">
    <property type="term" value="C:glycerol-3-phosphate dehydrogenase (FAD) complex"/>
    <property type="evidence" value="ECO:0000303"/>
    <property type="project" value="ComplexPortal"/>
</dbReference>
<dbReference type="GO" id="GO:0005886">
    <property type="term" value="C:plasma membrane"/>
    <property type="evidence" value="ECO:0007669"/>
    <property type="project" value="UniProtKB-SubCell"/>
</dbReference>
<dbReference type="GO" id="GO:0010181">
    <property type="term" value="F:FMN binding"/>
    <property type="evidence" value="ECO:0000255"/>
    <property type="project" value="EcoCyc"/>
</dbReference>
<dbReference type="GO" id="GO:0004368">
    <property type="term" value="F:glycerol-3-phosphate dehydrogenase (quinone) activity"/>
    <property type="evidence" value="ECO:0000314"/>
    <property type="project" value="EcoCyc"/>
</dbReference>
<dbReference type="GO" id="GO:0009061">
    <property type="term" value="P:anaerobic respiration"/>
    <property type="evidence" value="ECO:0000270"/>
    <property type="project" value="EcoCyc"/>
</dbReference>
<dbReference type="GO" id="GO:0019563">
    <property type="term" value="P:glycerol catabolic process"/>
    <property type="evidence" value="ECO:0007669"/>
    <property type="project" value="UniProtKB-UniRule"/>
</dbReference>
<dbReference type="GO" id="GO:0046168">
    <property type="term" value="P:glycerol-3-phosphate catabolic process"/>
    <property type="evidence" value="ECO:0000314"/>
    <property type="project" value="EcoCyc"/>
</dbReference>
<dbReference type="Gene3D" id="3.50.50.60">
    <property type="entry name" value="FAD/NAD(P)-binding domain"/>
    <property type="match status" value="1"/>
</dbReference>
<dbReference type="HAMAP" id="MF_00753">
    <property type="entry name" value="Glycerol3P_GlpB"/>
    <property type="match status" value="1"/>
</dbReference>
<dbReference type="InterPro" id="IPR003953">
    <property type="entry name" value="FAD-dep_OxRdtase_2_FAD-bd"/>
</dbReference>
<dbReference type="InterPro" id="IPR050315">
    <property type="entry name" value="FAD-oxidoreductase_2"/>
</dbReference>
<dbReference type="InterPro" id="IPR036188">
    <property type="entry name" value="FAD/NAD-bd_sf"/>
</dbReference>
<dbReference type="InterPro" id="IPR009158">
    <property type="entry name" value="G3P_DH_GlpB_su"/>
</dbReference>
<dbReference type="NCBIfam" id="TIGR03378">
    <property type="entry name" value="glycerol3P_GlpB"/>
    <property type="match status" value="1"/>
</dbReference>
<dbReference type="NCBIfam" id="NF003718">
    <property type="entry name" value="PRK05329.1-1"/>
    <property type="match status" value="1"/>
</dbReference>
<dbReference type="NCBIfam" id="NF003719">
    <property type="entry name" value="PRK05329.1-2"/>
    <property type="match status" value="1"/>
</dbReference>
<dbReference type="NCBIfam" id="NF003720">
    <property type="entry name" value="PRK05329.1-3"/>
    <property type="match status" value="1"/>
</dbReference>
<dbReference type="PANTHER" id="PTHR43400:SF11">
    <property type="entry name" value="ANAEROBIC GLYCEROL-3-PHOSPHATE DEHYDROGENASE SUBUNIT B"/>
    <property type="match status" value="1"/>
</dbReference>
<dbReference type="PANTHER" id="PTHR43400">
    <property type="entry name" value="FUMARATE REDUCTASE"/>
    <property type="match status" value="1"/>
</dbReference>
<dbReference type="Pfam" id="PF00890">
    <property type="entry name" value="FAD_binding_2"/>
    <property type="match status" value="1"/>
</dbReference>
<dbReference type="PIRSF" id="PIRSF000141">
    <property type="entry name" value="Anaerobic_G3P_dh"/>
    <property type="match status" value="1"/>
</dbReference>
<dbReference type="SUPFAM" id="SSF51905">
    <property type="entry name" value="FAD/NAD(P)-binding domain"/>
    <property type="match status" value="1"/>
</dbReference>
<sequence length="419" mass="45357">MRFDTVIMGGGLAGLLCGLQLQKHGLRCAIVTRGQSALHFSSGSLDLLSHLPDGQPVTDIHSGLESLRQQAPAHPYSLLEPQRVLDLACQAQALIAESGAQLQGSVELAHQRVTPLGTLRSTWLSSPEVPVWPLPAKKICVVGISGLMDFQAHLAAASLRELGLAVETAEIELPELDVLRNNATEFRAVNIARFLDNEENWPLLLDALIPVANTCEMILMPACFGLADDKLWRWLNEKLPCSLMLLPTLPPSVLGIRLQNQLQRQFVRQGGVWMPGDEVKKVTCKNGVVNEIWTRNHADIPLRPRFAVLASGSFFSGGLVAERNGIREPILGLDVLQTATRGEWYKGDFFAPQPWQQFGVTTDETLRPSQAGQTIENLFAIGSVLGGFDPIAQGCGGGVCAVSALHAAQQIAQRAGGQQ</sequence>
<proteinExistence type="evidence at protein level"/>
<protein>
    <recommendedName>
        <fullName>Anaerobic glycerol-3-phosphate dehydrogenase subunit B</fullName>
        <shortName>Anaerobic G-3-P dehydrogenase subunit B</shortName>
        <shortName>Anaerobic G3Pdhase B</shortName>
        <ecNumber>1.1.5.3</ecNumber>
    </recommendedName>
</protein>
<comment type="function">
    <text>Conversion of glycerol 3-phosphate to dihydroxyacetone. Uses fumarate or nitrate as electron acceptor.</text>
</comment>
<comment type="catalytic activity">
    <reaction>
        <text>a quinone + sn-glycerol 3-phosphate = dihydroxyacetone phosphate + a quinol</text>
        <dbReference type="Rhea" id="RHEA:18977"/>
        <dbReference type="ChEBI" id="CHEBI:24646"/>
        <dbReference type="ChEBI" id="CHEBI:57597"/>
        <dbReference type="ChEBI" id="CHEBI:57642"/>
        <dbReference type="ChEBI" id="CHEBI:132124"/>
        <dbReference type="EC" id="1.1.5.3"/>
    </reaction>
</comment>
<comment type="cofactor">
    <cofactor>
        <name>FMN</name>
        <dbReference type="ChEBI" id="CHEBI:58210"/>
    </cofactor>
</comment>
<comment type="pathway">
    <text>Polyol metabolism; glycerol degradation via glycerol kinase pathway; glycerone phosphate from sn-glycerol 3-phosphate (anaerobic route): step 1/1.</text>
</comment>
<comment type="subunit">
    <text>Composed of a catalytic GlpA/B dimer and of membrane bound GlpC.</text>
</comment>
<comment type="subcellular location">
    <subcellularLocation>
        <location>Cell inner membrane</location>
        <topology>Peripheral membrane protein</topology>
    </subcellularLocation>
    <text>Loosely bound to the cytoplasmic membrane often occurring in vesicles associated with fumarate reductase.</text>
</comment>
<comment type="similarity">
    <text evidence="1">Belongs to the anaerobic G-3-P dehydrogenase subunit B family.</text>
</comment>
<accession>P13033</accession>
<keyword id="KW-0997">Cell inner membrane</keyword>
<keyword id="KW-1003">Cell membrane</keyword>
<keyword id="KW-0903">Direct protein sequencing</keyword>
<keyword id="KW-0285">Flavoprotein</keyword>
<keyword id="KW-0288">FMN</keyword>
<keyword id="KW-0472">Membrane</keyword>
<keyword id="KW-0560">Oxidoreductase</keyword>
<keyword id="KW-1185">Reference proteome</keyword>